<evidence type="ECO:0000250" key="1"/>
<evidence type="ECO:0000256" key="2">
    <source>
        <dbReference type="SAM" id="MobiDB-lite"/>
    </source>
</evidence>
<evidence type="ECO:0000305" key="3"/>
<evidence type="ECO:0000312" key="4">
    <source>
        <dbReference type="EMBL" id="EAZ25680.1"/>
    </source>
</evidence>
<protein>
    <recommendedName>
        <fullName>Probable histone H2A variant 1</fullName>
    </recommendedName>
</protein>
<reference key="1">
    <citation type="journal article" date="2005" name="Genome Res.">
        <title>Sequence, annotation, and analysis of synteny between rice chromosome 3 and diverged grass species.</title>
        <authorList>
            <consortium name="The rice chromosome 3 sequencing consortium"/>
            <person name="Buell C.R."/>
            <person name="Yuan Q."/>
            <person name="Ouyang S."/>
            <person name="Liu J."/>
            <person name="Zhu W."/>
            <person name="Wang A."/>
            <person name="Maiti R."/>
            <person name="Haas B."/>
            <person name="Wortman J."/>
            <person name="Pertea M."/>
            <person name="Jones K.M."/>
            <person name="Kim M."/>
            <person name="Overton L."/>
            <person name="Tsitrin T."/>
            <person name="Fadrosh D."/>
            <person name="Bera J."/>
            <person name="Weaver B."/>
            <person name="Jin S."/>
            <person name="Johri S."/>
            <person name="Reardon M."/>
            <person name="Webb K."/>
            <person name="Hill J."/>
            <person name="Moffat K."/>
            <person name="Tallon L."/>
            <person name="Van Aken S."/>
            <person name="Lewis M."/>
            <person name="Utterback T."/>
            <person name="Feldblyum T."/>
            <person name="Zismann V."/>
            <person name="Iobst S."/>
            <person name="Hsiao J."/>
            <person name="de Vazeille A.R."/>
            <person name="Salzberg S.L."/>
            <person name="White O."/>
            <person name="Fraser C.M."/>
            <person name="Yu Y."/>
            <person name="Kim H."/>
            <person name="Rambo T."/>
            <person name="Currie J."/>
            <person name="Collura K."/>
            <person name="Kernodle-Thompson S."/>
            <person name="Wei F."/>
            <person name="Kudrna K."/>
            <person name="Ammiraju J.S.S."/>
            <person name="Luo M."/>
            <person name="Goicoechea J.L."/>
            <person name="Wing R.A."/>
            <person name="Henry D."/>
            <person name="Oates R."/>
            <person name="Palmer M."/>
            <person name="Pries G."/>
            <person name="Saski C."/>
            <person name="Simmons J."/>
            <person name="Soderlund C."/>
            <person name="Nelson W."/>
            <person name="de la Bastide M."/>
            <person name="Spiegel L."/>
            <person name="Nascimento L."/>
            <person name="Huang E."/>
            <person name="Preston R."/>
            <person name="Zutavern T."/>
            <person name="Palmer L."/>
            <person name="O'Shaughnessy A."/>
            <person name="Dike S."/>
            <person name="McCombie W.R."/>
            <person name="Minx P."/>
            <person name="Cordum H."/>
            <person name="Wilson R."/>
            <person name="Jin W."/>
            <person name="Lee H.R."/>
            <person name="Jiang J."/>
            <person name="Jackson S."/>
        </authorList>
    </citation>
    <scope>NUCLEOTIDE SEQUENCE [LARGE SCALE GENOMIC DNA]</scope>
    <source>
        <strain>cv. Nipponbare</strain>
    </source>
</reference>
<reference key="2">
    <citation type="journal article" date="2005" name="Nature">
        <title>The map-based sequence of the rice genome.</title>
        <authorList>
            <consortium name="International rice genome sequencing project (IRGSP)"/>
        </authorList>
    </citation>
    <scope>NUCLEOTIDE SEQUENCE [LARGE SCALE GENOMIC DNA]</scope>
    <source>
        <strain>cv. Nipponbare</strain>
    </source>
</reference>
<reference key="3">
    <citation type="journal article" date="2008" name="Nucleic Acids Res.">
        <title>The rice annotation project database (RAP-DB): 2008 update.</title>
        <authorList>
            <consortium name="The rice annotation project (RAP)"/>
        </authorList>
    </citation>
    <scope>GENOME REANNOTATION</scope>
    <source>
        <strain>cv. Nipponbare</strain>
    </source>
</reference>
<reference key="4">
    <citation type="journal article" date="2013" name="Rice">
        <title>Improvement of the Oryza sativa Nipponbare reference genome using next generation sequence and optical map data.</title>
        <authorList>
            <person name="Kawahara Y."/>
            <person name="de la Bastide M."/>
            <person name="Hamilton J.P."/>
            <person name="Kanamori H."/>
            <person name="McCombie W.R."/>
            <person name="Ouyang S."/>
            <person name="Schwartz D.C."/>
            <person name="Tanaka T."/>
            <person name="Wu J."/>
            <person name="Zhou S."/>
            <person name="Childs K.L."/>
            <person name="Davidson R.M."/>
            <person name="Lin H."/>
            <person name="Quesada-Ocampo L."/>
            <person name="Vaillancourt B."/>
            <person name="Sakai H."/>
            <person name="Lee S.S."/>
            <person name="Kim J."/>
            <person name="Numa H."/>
            <person name="Itoh T."/>
            <person name="Buell C.R."/>
            <person name="Matsumoto T."/>
        </authorList>
    </citation>
    <scope>GENOME REANNOTATION</scope>
    <source>
        <strain>cv. Nipponbare</strain>
    </source>
</reference>
<reference key="5">
    <citation type="journal article" date="2005" name="PLoS Biol.">
        <title>The genomes of Oryza sativa: a history of duplications.</title>
        <authorList>
            <person name="Yu J."/>
            <person name="Wang J."/>
            <person name="Lin W."/>
            <person name="Li S."/>
            <person name="Li H."/>
            <person name="Zhou J."/>
            <person name="Ni P."/>
            <person name="Dong W."/>
            <person name="Hu S."/>
            <person name="Zeng C."/>
            <person name="Zhang J."/>
            <person name="Zhang Y."/>
            <person name="Li R."/>
            <person name="Xu Z."/>
            <person name="Li S."/>
            <person name="Li X."/>
            <person name="Zheng H."/>
            <person name="Cong L."/>
            <person name="Lin L."/>
            <person name="Yin J."/>
            <person name="Geng J."/>
            <person name="Li G."/>
            <person name="Shi J."/>
            <person name="Liu J."/>
            <person name="Lv H."/>
            <person name="Li J."/>
            <person name="Wang J."/>
            <person name="Deng Y."/>
            <person name="Ran L."/>
            <person name="Shi X."/>
            <person name="Wang X."/>
            <person name="Wu Q."/>
            <person name="Li C."/>
            <person name="Ren X."/>
            <person name="Wang J."/>
            <person name="Wang X."/>
            <person name="Li D."/>
            <person name="Liu D."/>
            <person name="Zhang X."/>
            <person name="Ji Z."/>
            <person name="Zhao W."/>
            <person name="Sun Y."/>
            <person name="Zhang Z."/>
            <person name="Bao J."/>
            <person name="Han Y."/>
            <person name="Dong L."/>
            <person name="Ji J."/>
            <person name="Chen P."/>
            <person name="Wu S."/>
            <person name="Liu J."/>
            <person name="Xiao Y."/>
            <person name="Bu D."/>
            <person name="Tan J."/>
            <person name="Yang L."/>
            <person name="Ye C."/>
            <person name="Zhang J."/>
            <person name="Xu J."/>
            <person name="Zhou Y."/>
            <person name="Yu Y."/>
            <person name="Zhang B."/>
            <person name="Zhuang S."/>
            <person name="Wei H."/>
            <person name="Liu B."/>
            <person name="Lei M."/>
            <person name="Yu H."/>
            <person name="Li Y."/>
            <person name="Xu H."/>
            <person name="Wei S."/>
            <person name="He X."/>
            <person name="Fang L."/>
            <person name="Zhang Z."/>
            <person name="Zhang Y."/>
            <person name="Huang X."/>
            <person name="Su Z."/>
            <person name="Tong W."/>
            <person name="Li J."/>
            <person name="Tong Z."/>
            <person name="Li S."/>
            <person name="Ye J."/>
            <person name="Wang L."/>
            <person name="Fang L."/>
            <person name="Lei T."/>
            <person name="Chen C.-S."/>
            <person name="Chen H.-C."/>
            <person name="Xu Z."/>
            <person name="Li H."/>
            <person name="Huang H."/>
            <person name="Zhang F."/>
            <person name="Xu H."/>
            <person name="Li N."/>
            <person name="Zhao C."/>
            <person name="Li S."/>
            <person name="Dong L."/>
            <person name="Huang Y."/>
            <person name="Li L."/>
            <person name="Xi Y."/>
            <person name="Qi Q."/>
            <person name="Li W."/>
            <person name="Zhang B."/>
            <person name="Hu W."/>
            <person name="Zhang Y."/>
            <person name="Tian X."/>
            <person name="Jiao Y."/>
            <person name="Liang X."/>
            <person name="Jin J."/>
            <person name="Gao L."/>
            <person name="Zheng W."/>
            <person name="Hao B."/>
            <person name="Liu S.-M."/>
            <person name="Wang W."/>
            <person name="Yuan L."/>
            <person name="Cao M."/>
            <person name="McDermott J."/>
            <person name="Samudrala R."/>
            <person name="Wang J."/>
            <person name="Wong G.K.-S."/>
            <person name="Yang H."/>
        </authorList>
    </citation>
    <scope>NUCLEOTIDE SEQUENCE [LARGE SCALE GENOMIC DNA]</scope>
    <source>
        <strain>cv. Nipponbare</strain>
    </source>
</reference>
<reference key="6">
    <citation type="journal article" date="2003" name="Science">
        <title>Collection, mapping, and annotation of over 28,000 cDNA clones from japonica rice.</title>
        <authorList>
            <consortium name="The rice full-length cDNA consortium"/>
        </authorList>
    </citation>
    <scope>NUCLEOTIDE SEQUENCE [LARGE SCALE MRNA]</scope>
    <source>
        <strain>cv. Nipponbare</strain>
    </source>
</reference>
<feature type="chain" id="PRO_0000055315" description="Probable histone H2A variant 1">
    <location>
        <begin position="1"/>
        <end position="138"/>
    </location>
</feature>
<feature type="region of interest" description="Disordered" evidence="2">
    <location>
        <begin position="1"/>
        <end position="42"/>
    </location>
</feature>
<feature type="compositionally biased region" description="Low complexity" evidence="2">
    <location>
        <begin position="9"/>
        <end position="18"/>
    </location>
</feature>
<feature type="compositionally biased region" description="Basic and acidic residues" evidence="2">
    <location>
        <begin position="19"/>
        <end position="28"/>
    </location>
</feature>
<dbReference type="EMBL" id="AC105729">
    <property type="protein sequence ID" value="AAN06860.1"/>
    <property type="molecule type" value="Genomic_DNA"/>
</dbReference>
<dbReference type="EMBL" id="DP000009">
    <property type="protein sequence ID" value="ABF94121.1"/>
    <property type="molecule type" value="Genomic_DNA"/>
</dbReference>
<dbReference type="EMBL" id="AP008209">
    <property type="protein sequence ID" value="BAF10963.1"/>
    <property type="molecule type" value="Genomic_DNA"/>
</dbReference>
<dbReference type="EMBL" id="AP014959">
    <property type="protein sequence ID" value="BAS82426.1"/>
    <property type="molecule type" value="Genomic_DNA"/>
</dbReference>
<dbReference type="EMBL" id="CM000140">
    <property type="protein sequence ID" value="EAZ25680.1"/>
    <property type="molecule type" value="Genomic_DNA"/>
</dbReference>
<dbReference type="EMBL" id="AK061605">
    <property type="protein sequence ID" value="BAG88035.1"/>
    <property type="molecule type" value="mRNA"/>
</dbReference>
<dbReference type="EMBL" id="AK121533">
    <property type="protein sequence ID" value="BAH00539.1"/>
    <property type="molecule type" value="mRNA"/>
</dbReference>
<dbReference type="RefSeq" id="XP_015628946.1">
    <property type="nucleotide sequence ID" value="XM_015773460.1"/>
</dbReference>
<dbReference type="SMR" id="Q8H7Y8"/>
<dbReference type="FunCoup" id="Q8H7Y8">
    <property type="interactions" value="2389"/>
</dbReference>
<dbReference type="STRING" id="39947.Q8H7Y8"/>
<dbReference type="PaxDb" id="39947-Q8H7Y8"/>
<dbReference type="EnsemblPlants" id="Os03t0162200-01">
    <property type="protein sequence ID" value="Os03t0162200-01"/>
    <property type="gene ID" value="Os03g0162200"/>
</dbReference>
<dbReference type="Gramene" id="Os03t0162200-01">
    <property type="protein sequence ID" value="Os03t0162200-01"/>
    <property type="gene ID" value="Os03g0162200"/>
</dbReference>
<dbReference type="KEGG" id="dosa:Os03g0162200"/>
<dbReference type="eggNOG" id="KOG1757">
    <property type="taxonomic scope" value="Eukaryota"/>
</dbReference>
<dbReference type="HOGENOM" id="CLU_062828_2_2_1"/>
<dbReference type="InParanoid" id="Q8H7Y8"/>
<dbReference type="OMA" id="MNKKGAP"/>
<dbReference type="OrthoDB" id="9421954at2759"/>
<dbReference type="Proteomes" id="UP000000763">
    <property type="component" value="Chromosome 3"/>
</dbReference>
<dbReference type="Proteomes" id="UP000007752">
    <property type="component" value="Chromosome 3"/>
</dbReference>
<dbReference type="Proteomes" id="UP000059680">
    <property type="component" value="Chromosome 3"/>
</dbReference>
<dbReference type="GO" id="GO:0000786">
    <property type="term" value="C:nucleosome"/>
    <property type="evidence" value="ECO:0000318"/>
    <property type="project" value="GO_Central"/>
</dbReference>
<dbReference type="GO" id="GO:0005634">
    <property type="term" value="C:nucleus"/>
    <property type="evidence" value="ECO:0000318"/>
    <property type="project" value="GO_Central"/>
</dbReference>
<dbReference type="GO" id="GO:0003677">
    <property type="term" value="F:DNA binding"/>
    <property type="evidence" value="ECO:0007669"/>
    <property type="project" value="UniProtKB-KW"/>
</dbReference>
<dbReference type="GO" id="GO:0046982">
    <property type="term" value="F:protein heterodimerization activity"/>
    <property type="evidence" value="ECO:0007669"/>
    <property type="project" value="InterPro"/>
</dbReference>
<dbReference type="GO" id="GO:0030527">
    <property type="term" value="F:structural constituent of chromatin"/>
    <property type="evidence" value="ECO:0000318"/>
    <property type="project" value="GO_Central"/>
</dbReference>
<dbReference type="GO" id="GO:0031507">
    <property type="term" value="P:heterochromatin formation"/>
    <property type="evidence" value="ECO:0000318"/>
    <property type="project" value="GO_Central"/>
</dbReference>
<dbReference type="CDD" id="cd00074">
    <property type="entry name" value="HFD_H2A"/>
    <property type="match status" value="1"/>
</dbReference>
<dbReference type="FunFam" id="1.10.20.10:FF:000005">
    <property type="entry name" value="Histone H2A"/>
    <property type="match status" value="1"/>
</dbReference>
<dbReference type="Gene3D" id="1.10.20.10">
    <property type="entry name" value="Histone, subunit A"/>
    <property type="match status" value="1"/>
</dbReference>
<dbReference type="InterPro" id="IPR009072">
    <property type="entry name" value="Histone-fold"/>
</dbReference>
<dbReference type="InterPro" id="IPR002119">
    <property type="entry name" value="Histone_H2A"/>
</dbReference>
<dbReference type="InterPro" id="IPR007125">
    <property type="entry name" value="Histone_H2A/H2B/H3"/>
</dbReference>
<dbReference type="InterPro" id="IPR032454">
    <property type="entry name" value="Histone_H2A_C"/>
</dbReference>
<dbReference type="InterPro" id="IPR032458">
    <property type="entry name" value="Histone_H2A_CS"/>
</dbReference>
<dbReference type="PANTHER" id="PTHR23430">
    <property type="entry name" value="HISTONE H2A"/>
    <property type="match status" value="1"/>
</dbReference>
<dbReference type="Pfam" id="PF00125">
    <property type="entry name" value="Histone"/>
    <property type="match status" value="1"/>
</dbReference>
<dbReference type="Pfam" id="PF16211">
    <property type="entry name" value="Histone_H2A_C"/>
    <property type="match status" value="1"/>
</dbReference>
<dbReference type="PRINTS" id="PR00620">
    <property type="entry name" value="HISTONEH2A"/>
</dbReference>
<dbReference type="SMART" id="SM00414">
    <property type="entry name" value="H2A"/>
    <property type="match status" value="1"/>
</dbReference>
<dbReference type="SUPFAM" id="SSF47113">
    <property type="entry name" value="Histone-fold"/>
    <property type="match status" value="1"/>
</dbReference>
<dbReference type="PROSITE" id="PS00046">
    <property type="entry name" value="HISTONE_H2A"/>
    <property type="match status" value="1"/>
</dbReference>
<comment type="function">
    <text evidence="1">Variant histones H2A are synthesized throughout the cell cycle and are very different from classical S-phase regulated H2A. May replace conventional H2A in a subset of nucleosomes. Nucleosomes wrap and compact DNA into chromatin, limiting DNA accessibility to the cellular machineries which require DNA as a template. Histones thereby play a central role in transcription regulation, DNA repair, DNA replication and chromosomal stability. DNA accessibility is regulated via a complex set of post-translational modifications of histones, also called histone code, and nucleosome remodeling (By similarity).</text>
</comment>
<comment type="subunit">
    <text>The nucleosome is a histone octamer containing two molecules each of H2A, H2B, H3 and H4 assembled in one H3-H4 heterotetramer and two H2A-H2B heterodimers. The octamer wraps approximately 147 bp of DNA.</text>
</comment>
<comment type="subcellular location">
    <subcellularLocation>
        <location evidence="1">Nucleus</location>
    </subcellularLocation>
    <subcellularLocation>
        <location evidence="1">Chromosome</location>
    </subcellularLocation>
</comment>
<comment type="similarity">
    <text evidence="3">Belongs to the histone H2A family.</text>
</comment>
<proteinExistence type="evidence at transcript level"/>
<accession>Q8H7Y8</accession>
<accession>Q10RE1</accession>
<sequence length="138" mass="14556">MAGKGGKGLLAAKTTAAKSADKDKDKKKAPVSRSSRAGLQFPVGRIHRQLKSRASAHGRVGATAAVYSAAILEYLTAEVLELAGNASKDLKVKRITPRHLQLAIRGDEELDTLIKGTIAGGGVIPHIHKSLINKTSKE</sequence>
<keyword id="KW-0158">Chromosome</keyword>
<keyword id="KW-0238">DNA-binding</keyword>
<keyword id="KW-0544">Nucleosome core</keyword>
<keyword id="KW-0539">Nucleus</keyword>
<keyword id="KW-1185">Reference proteome</keyword>
<name>H2AV1_ORYSJ</name>
<organism>
    <name type="scientific">Oryza sativa subsp. japonica</name>
    <name type="common">Rice</name>
    <dbReference type="NCBI Taxonomy" id="39947"/>
    <lineage>
        <taxon>Eukaryota</taxon>
        <taxon>Viridiplantae</taxon>
        <taxon>Streptophyta</taxon>
        <taxon>Embryophyta</taxon>
        <taxon>Tracheophyta</taxon>
        <taxon>Spermatophyta</taxon>
        <taxon>Magnoliopsida</taxon>
        <taxon>Liliopsida</taxon>
        <taxon>Poales</taxon>
        <taxon>Poaceae</taxon>
        <taxon>BOP clade</taxon>
        <taxon>Oryzoideae</taxon>
        <taxon>Oryzeae</taxon>
        <taxon>Oryzinae</taxon>
        <taxon>Oryza</taxon>
        <taxon>Oryza sativa</taxon>
    </lineage>
</organism>
<gene>
    <name type="ordered locus">Os03g0162200</name>
    <name type="ordered locus">LOC_Os03g06670</name>
    <name type="ORF">OJ1607A12.10</name>
    <name evidence="4" type="ORF">OsJ_09510</name>
</gene>